<dbReference type="EMBL" id="CP001598">
    <property type="protein sequence ID" value="ACQ46586.1"/>
    <property type="molecule type" value="Genomic_DNA"/>
</dbReference>
<dbReference type="RefSeq" id="WP_000526077.1">
    <property type="nucleotide sequence ID" value="NC_012659.1"/>
</dbReference>
<dbReference type="SMR" id="C3P2E4"/>
<dbReference type="KEGG" id="bai:BAA_5659"/>
<dbReference type="HOGENOM" id="CLU_163820_1_0_9"/>
<dbReference type="HAMAP" id="MF_01863">
    <property type="entry name" value="UPF0741"/>
    <property type="match status" value="1"/>
</dbReference>
<dbReference type="InterPro" id="IPR009910">
    <property type="entry name" value="DUF1450"/>
</dbReference>
<dbReference type="InterPro" id="IPR020880">
    <property type="entry name" value="UPF0741"/>
</dbReference>
<dbReference type="Pfam" id="PF07293">
    <property type="entry name" value="DUF1450"/>
    <property type="match status" value="1"/>
</dbReference>
<evidence type="ECO:0000255" key="1">
    <source>
        <dbReference type="HAMAP-Rule" id="MF_01863"/>
    </source>
</evidence>
<sequence length="74" mass="8132">MGNEFRVCDDCQATNVKTLIPKLKKVDSCATIEVGCQSYCGPGRKKSFAFVNNRPVAAPTEDELIVKIEAKLNK</sequence>
<accession>C3P2E4</accession>
<protein>
    <recommendedName>
        <fullName evidence="1">UPF0741 protein BAA_5659</fullName>
    </recommendedName>
</protein>
<gene>
    <name type="ordered locus">BAA_5659</name>
</gene>
<reference key="1">
    <citation type="submission" date="2009-04" db="EMBL/GenBank/DDBJ databases">
        <title>Genome sequence of Bacillus anthracis A0248.</title>
        <authorList>
            <person name="Dodson R.J."/>
            <person name="Munk A.C."/>
            <person name="Bruce D."/>
            <person name="Detter C."/>
            <person name="Tapia R."/>
            <person name="Sutton G."/>
            <person name="Sims D."/>
            <person name="Brettin T."/>
        </authorList>
    </citation>
    <scope>NUCLEOTIDE SEQUENCE [LARGE SCALE GENOMIC DNA]</scope>
    <source>
        <strain>A0248</strain>
    </source>
</reference>
<organism>
    <name type="scientific">Bacillus anthracis (strain A0248)</name>
    <dbReference type="NCBI Taxonomy" id="592021"/>
    <lineage>
        <taxon>Bacteria</taxon>
        <taxon>Bacillati</taxon>
        <taxon>Bacillota</taxon>
        <taxon>Bacilli</taxon>
        <taxon>Bacillales</taxon>
        <taxon>Bacillaceae</taxon>
        <taxon>Bacillus</taxon>
        <taxon>Bacillus cereus group</taxon>
    </lineage>
</organism>
<feature type="chain" id="PRO_1000188710" description="UPF0741 protein BAA_5659">
    <location>
        <begin position="1"/>
        <end position="74"/>
    </location>
</feature>
<name>Y5659_BACAA</name>
<proteinExistence type="inferred from homology"/>
<comment type="similarity">
    <text evidence="1">Belongs to the UPF0741 family.</text>
</comment>